<organism>
    <name type="scientific">Thermus thermophilus (strain ATCC 27634 / DSM 579 / HB8)</name>
    <dbReference type="NCBI Taxonomy" id="300852"/>
    <lineage>
        <taxon>Bacteria</taxon>
        <taxon>Thermotogati</taxon>
        <taxon>Deinococcota</taxon>
        <taxon>Deinococci</taxon>
        <taxon>Thermales</taxon>
        <taxon>Thermaceae</taxon>
        <taxon>Thermus</taxon>
    </lineage>
</organism>
<evidence type="ECO:0000255" key="1">
    <source>
        <dbReference type="HAMAP-Rule" id="MF_00375"/>
    </source>
</evidence>
<evidence type="ECO:0007829" key="2">
    <source>
        <dbReference type="PDB" id="2E7U"/>
    </source>
</evidence>
<gene>
    <name evidence="1" type="primary">hemL</name>
    <name type="ordered locus">TTHA0934</name>
</gene>
<dbReference type="EC" id="5.4.3.8" evidence="1"/>
<dbReference type="EMBL" id="AP008226">
    <property type="protein sequence ID" value="BAD70757.1"/>
    <property type="molecule type" value="Genomic_DNA"/>
</dbReference>
<dbReference type="RefSeq" id="WP_011228305.1">
    <property type="nucleotide sequence ID" value="NC_006461.1"/>
</dbReference>
<dbReference type="RefSeq" id="YP_144200.1">
    <property type="nucleotide sequence ID" value="NC_006461.1"/>
</dbReference>
<dbReference type="PDB" id="2E7U">
    <property type="method" value="X-ray"/>
    <property type="resolution" value="1.90 A"/>
    <property type="chains" value="A=1-424"/>
</dbReference>
<dbReference type="PDBsum" id="2E7U"/>
<dbReference type="SMR" id="Q5SJS4"/>
<dbReference type="EnsemblBacteria" id="BAD70757">
    <property type="protein sequence ID" value="BAD70757"/>
    <property type="gene ID" value="BAD70757"/>
</dbReference>
<dbReference type="GeneID" id="3168378"/>
<dbReference type="KEGG" id="ttj:TTHA0934"/>
<dbReference type="PATRIC" id="fig|300852.9.peg.917"/>
<dbReference type="eggNOG" id="COG0001">
    <property type="taxonomic scope" value="Bacteria"/>
</dbReference>
<dbReference type="HOGENOM" id="CLU_016922_1_5_0"/>
<dbReference type="PhylomeDB" id="Q5SJS4"/>
<dbReference type="UniPathway" id="UPA00251">
    <property type="reaction ID" value="UER00317"/>
</dbReference>
<dbReference type="EvolutionaryTrace" id="Q5SJS4"/>
<dbReference type="Proteomes" id="UP000000532">
    <property type="component" value="Chromosome"/>
</dbReference>
<dbReference type="GO" id="GO:0005737">
    <property type="term" value="C:cytoplasm"/>
    <property type="evidence" value="ECO:0007669"/>
    <property type="project" value="UniProtKB-SubCell"/>
</dbReference>
<dbReference type="GO" id="GO:0042286">
    <property type="term" value="F:glutamate-1-semialdehyde 2,1-aminomutase activity"/>
    <property type="evidence" value="ECO:0007669"/>
    <property type="project" value="UniProtKB-UniRule"/>
</dbReference>
<dbReference type="GO" id="GO:0030170">
    <property type="term" value="F:pyridoxal phosphate binding"/>
    <property type="evidence" value="ECO:0007669"/>
    <property type="project" value="InterPro"/>
</dbReference>
<dbReference type="GO" id="GO:0008483">
    <property type="term" value="F:transaminase activity"/>
    <property type="evidence" value="ECO:0007669"/>
    <property type="project" value="InterPro"/>
</dbReference>
<dbReference type="GO" id="GO:0006782">
    <property type="term" value="P:protoporphyrinogen IX biosynthetic process"/>
    <property type="evidence" value="ECO:0007669"/>
    <property type="project" value="UniProtKB-UniRule"/>
</dbReference>
<dbReference type="CDD" id="cd00610">
    <property type="entry name" value="OAT_like"/>
    <property type="match status" value="1"/>
</dbReference>
<dbReference type="FunFam" id="3.40.640.10:FF:000021">
    <property type="entry name" value="Glutamate-1-semialdehyde 2,1-aminomutase"/>
    <property type="match status" value="1"/>
</dbReference>
<dbReference type="Gene3D" id="3.90.1150.10">
    <property type="entry name" value="Aspartate Aminotransferase, domain 1"/>
    <property type="match status" value="1"/>
</dbReference>
<dbReference type="Gene3D" id="3.40.640.10">
    <property type="entry name" value="Type I PLP-dependent aspartate aminotransferase-like (Major domain)"/>
    <property type="match status" value="1"/>
</dbReference>
<dbReference type="HAMAP" id="MF_00375">
    <property type="entry name" value="HemL_aminotrans_3"/>
    <property type="match status" value="1"/>
</dbReference>
<dbReference type="InterPro" id="IPR004639">
    <property type="entry name" value="4pyrrol_synth_GluAld_NH2Trfase"/>
</dbReference>
<dbReference type="InterPro" id="IPR005814">
    <property type="entry name" value="Aminotrans_3"/>
</dbReference>
<dbReference type="InterPro" id="IPR049704">
    <property type="entry name" value="Aminotrans_3_PPA_site"/>
</dbReference>
<dbReference type="InterPro" id="IPR015424">
    <property type="entry name" value="PyrdxlP-dep_Trfase"/>
</dbReference>
<dbReference type="InterPro" id="IPR015421">
    <property type="entry name" value="PyrdxlP-dep_Trfase_major"/>
</dbReference>
<dbReference type="InterPro" id="IPR015422">
    <property type="entry name" value="PyrdxlP-dep_Trfase_small"/>
</dbReference>
<dbReference type="NCBIfam" id="TIGR00713">
    <property type="entry name" value="hemL"/>
    <property type="match status" value="1"/>
</dbReference>
<dbReference type="NCBIfam" id="NF000818">
    <property type="entry name" value="PRK00062.1"/>
    <property type="match status" value="1"/>
</dbReference>
<dbReference type="PANTHER" id="PTHR43713">
    <property type="entry name" value="GLUTAMATE-1-SEMIALDEHYDE 2,1-AMINOMUTASE"/>
    <property type="match status" value="1"/>
</dbReference>
<dbReference type="PANTHER" id="PTHR43713:SF3">
    <property type="entry name" value="GLUTAMATE-1-SEMIALDEHYDE 2,1-AMINOMUTASE 1, CHLOROPLASTIC-RELATED"/>
    <property type="match status" value="1"/>
</dbReference>
<dbReference type="Pfam" id="PF00202">
    <property type="entry name" value="Aminotran_3"/>
    <property type="match status" value="1"/>
</dbReference>
<dbReference type="SUPFAM" id="SSF53383">
    <property type="entry name" value="PLP-dependent transferases"/>
    <property type="match status" value="1"/>
</dbReference>
<dbReference type="PROSITE" id="PS00600">
    <property type="entry name" value="AA_TRANSFER_CLASS_3"/>
    <property type="match status" value="1"/>
</dbReference>
<accession>Q5SJS4</accession>
<comment type="catalytic activity">
    <reaction evidence="1">
        <text>(S)-4-amino-5-oxopentanoate = 5-aminolevulinate</text>
        <dbReference type="Rhea" id="RHEA:14265"/>
        <dbReference type="ChEBI" id="CHEBI:57501"/>
        <dbReference type="ChEBI" id="CHEBI:356416"/>
        <dbReference type="EC" id="5.4.3.8"/>
    </reaction>
</comment>
<comment type="cofactor">
    <cofactor evidence="1">
        <name>pyridoxal 5'-phosphate</name>
        <dbReference type="ChEBI" id="CHEBI:597326"/>
    </cofactor>
</comment>
<comment type="pathway">
    <text evidence="1">Porphyrin-containing compound metabolism; protoporphyrin-IX biosynthesis; 5-aminolevulinate from L-glutamyl-tRNA(Glu): step 2/2.</text>
</comment>
<comment type="subunit">
    <text evidence="1">Homodimer.</text>
</comment>
<comment type="subcellular location">
    <subcellularLocation>
        <location evidence="1">Cytoplasm</location>
    </subcellularLocation>
</comment>
<comment type="similarity">
    <text evidence="1">Belongs to the class-III pyridoxal-phosphate-dependent aminotransferase family. HemL subfamily.</text>
</comment>
<sequence>MERPISEAYFQEAKRHIPGGVSSPVRAFKAVGGTPPFLVRGEGAYVWDADGNRYLDYVMSWGPLILGHAHPKVLARVRETLERGLTFGAPSPLEVALAKKVKRAYPFVDLVRFVNSGTEATMSALRLARGYTGRPYIVKFRGNYHGHADGLLVEAGSGALTLGVPSSAGVPEEYAKLTLVLEYNDPEGLREVLKRRGEEIAAIIFEPVVGNAGVLVPTEDFLKALHEAKAYGVLLIADEVMTGFRLAFGGATELLGLKPDLVTLGKILGGGLPAAAYAGRREIMEKVAPLGPVYQAGTLSGNPLAMAAGLATLELLEENPGYYAYLEDLGARLEAGLKEVLKEKGLPHTVNRVGSMITVFFTEGPVVTFQDARRTDTELFKRFFHGLLDRGIYWPPSNFEAAFLSVAHREEDVEKTLEALRKAL</sequence>
<proteinExistence type="evidence at protein level"/>
<reference key="1">
    <citation type="submission" date="2004-11" db="EMBL/GenBank/DDBJ databases">
        <title>Complete genome sequence of Thermus thermophilus HB8.</title>
        <authorList>
            <person name="Masui R."/>
            <person name="Kurokawa K."/>
            <person name="Nakagawa N."/>
            <person name="Tokunaga F."/>
            <person name="Koyama Y."/>
            <person name="Shibata T."/>
            <person name="Oshima T."/>
            <person name="Yokoyama S."/>
            <person name="Yasunaga T."/>
            <person name="Kuramitsu S."/>
        </authorList>
    </citation>
    <scope>NUCLEOTIDE SEQUENCE [LARGE SCALE GENOMIC DNA]</scope>
    <source>
        <strain>ATCC 27634 / DSM 579 / HB8</strain>
    </source>
</reference>
<protein>
    <recommendedName>
        <fullName evidence="1">Glutamate-1-semialdehyde 2,1-aminomutase</fullName>
        <shortName evidence="1">GSA</shortName>
        <ecNumber evidence="1">5.4.3.8</ecNumber>
    </recommendedName>
    <alternativeName>
        <fullName evidence="1">Glutamate-1-semialdehyde aminotransferase</fullName>
        <shortName evidence="1">GSA-AT</shortName>
    </alternativeName>
</protein>
<feature type="chain" id="PRO_0000243636" description="Glutamate-1-semialdehyde 2,1-aminomutase">
    <location>
        <begin position="1"/>
        <end position="424"/>
    </location>
</feature>
<feature type="modified residue" description="N6-(pyridoxal phosphate)lysine" evidence="1">
    <location>
        <position position="266"/>
    </location>
</feature>
<feature type="helix" evidence="2">
    <location>
        <begin position="4"/>
        <end position="16"/>
    </location>
</feature>
<feature type="helix" evidence="2">
    <location>
        <begin position="18"/>
        <end position="20"/>
    </location>
</feature>
<feature type="strand" evidence="2">
    <location>
        <begin position="21"/>
        <end position="23"/>
    </location>
</feature>
<feature type="helix" evidence="2">
    <location>
        <begin position="24"/>
        <end position="27"/>
    </location>
</feature>
<feature type="turn" evidence="2">
    <location>
        <begin position="29"/>
        <end position="31"/>
    </location>
</feature>
<feature type="strand" evidence="2">
    <location>
        <begin position="38"/>
        <end position="43"/>
    </location>
</feature>
<feature type="strand" evidence="2">
    <location>
        <begin position="45"/>
        <end position="48"/>
    </location>
</feature>
<feature type="strand" evidence="2">
    <location>
        <begin position="53"/>
        <end position="58"/>
    </location>
</feature>
<feature type="helix" evidence="2">
    <location>
        <begin position="59"/>
        <end position="61"/>
    </location>
</feature>
<feature type="helix" evidence="2">
    <location>
        <begin position="71"/>
        <end position="82"/>
    </location>
</feature>
<feature type="helix" evidence="2">
    <location>
        <begin position="92"/>
        <end position="104"/>
    </location>
</feature>
<feature type="strand" evidence="2">
    <location>
        <begin position="110"/>
        <end position="116"/>
    </location>
</feature>
<feature type="helix" evidence="2">
    <location>
        <begin position="117"/>
        <end position="132"/>
    </location>
</feature>
<feature type="strand" evidence="2">
    <location>
        <begin position="136"/>
        <end position="140"/>
    </location>
</feature>
<feature type="helix" evidence="2">
    <location>
        <begin position="149"/>
        <end position="151"/>
    </location>
</feature>
<feature type="strand" evidence="2">
    <location>
        <begin position="152"/>
        <end position="154"/>
    </location>
</feature>
<feature type="strand" evidence="2">
    <location>
        <begin position="157"/>
        <end position="159"/>
    </location>
</feature>
<feature type="strand" evidence="2">
    <location>
        <begin position="164"/>
        <end position="167"/>
    </location>
</feature>
<feature type="helix" evidence="2">
    <location>
        <begin position="172"/>
        <end position="175"/>
    </location>
</feature>
<feature type="strand" evidence="2">
    <location>
        <begin position="178"/>
        <end position="181"/>
    </location>
</feature>
<feature type="helix" evidence="2">
    <location>
        <begin position="186"/>
        <end position="196"/>
    </location>
</feature>
<feature type="helix" evidence="2">
    <location>
        <begin position="197"/>
        <end position="199"/>
    </location>
</feature>
<feature type="strand" evidence="2">
    <location>
        <begin position="200"/>
        <end position="205"/>
    </location>
</feature>
<feature type="strand" evidence="2">
    <location>
        <begin position="207"/>
        <end position="209"/>
    </location>
</feature>
<feature type="helix" evidence="2">
    <location>
        <begin position="219"/>
        <end position="227"/>
    </location>
</feature>
<feature type="helix" evidence="2">
    <location>
        <begin position="228"/>
        <end position="231"/>
    </location>
</feature>
<feature type="strand" evidence="2">
    <location>
        <begin position="234"/>
        <end position="238"/>
    </location>
</feature>
<feature type="turn" evidence="2">
    <location>
        <begin position="240"/>
        <end position="245"/>
    </location>
</feature>
<feature type="helix" evidence="2">
    <location>
        <begin position="250"/>
        <end position="255"/>
    </location>
</feature>
<feature type="strand" evidence="2">
    <location>
        <begin position="260"/>
        <end position="264"/>
    </location>
</feature>
<feature type="helix" evidence="2">
    <location>
        <begin position="266"/>
        <end position="269"/>
    </location>
</feature>
<feature type="strand" evidence="2">
    <location>
        <begin position="275"/>
        <end position="279"/>
    </location>
</feature>
<feature type="helix" evidence="2">
    <location>
        <begin position="281"/>
        <end position="284"/>
    </location>
</feature>
<feature type="turn" evidence="2">
    <location>
        <begin position="288"/>
        <end position="290"/>
    </location>
</feature>
<feature type="strand" evidence="2">
    <location>
        <begin position="291"/>
        <end position="293"/>
    </location>
</feature>
<feature type="helix" evidence="2">
    <location>
        <begin position="303"/>
        <end position="318"/>
    </location>
</feature>
<feature type="helix" evidence="2">
    <location>
        <begin position="321"/>
        <end position="343"/>
    </location>
</feature>
<feature type="strand" evidence="2">
    <location>
        <begin position="349"/>
        <end position="353"/>
    </location>
</feature>
<feature type="strand" evidence="2">
    <location>
        <begin position="356"/>
        <end position="364"/>
    </location>
</feature>
<feature type="helix" evidence="2">
    <location>
        <begin position="369"/>
        <end position="372"/>
    </location>
</feature>
<feature type="helix" evidence="2">
    <location>
        <begin position="377"/>
        <end position="388"/>
    </location>
</feature>
<feature type="turn" evidence="2">
    <location>
        <begin position="389"/>
        <end position="391"/>
    </location>
</feature>
<feature type="strand" evidence="2">
    <location>
        <begin position="396"/>
        <end position="400"/>
    </location>
</feature>
<feature type="helix" evidence="2">
    <location>
        <begin position="410"/>
        <end position="423"/>
    </location>
</feature>
<name>GSA_THET8</name>
<keyword id="KW-0002">3D-structure</keyword>
<keyword id="KW-0963">Cytoplasm</keyword>
<keyword id="KW-0413">Isomerase</keyword>
<keyword id="KW-0627">Porphyrin biosynthesis</keyword>
<keyword id="KW-0663">Pyridoxal phosphate</keyword>
<keyword id="KW-1185">Reference proteome</keyword>